<dbReference type="EMBL" id="U20193">
    <property type="protein sequence ID" value="AAC49085.1"/>
    <property type="molecule type" value="mRNA"/>
</dbReference>
<dbReference type="EMBL" id="AC012654">
    <property type="protein sequence ID" value="AAF43220.1"/>
    <property type="molecule type" value="Genomic_DNA"/>
</dbReference>
<dbReference type="EMBL" id="AC016163">
    <property type="protein sequence ID" value="AAG51837.1"/>
    <property type="molecule type" value="Genomic_DNA"/>
</dbReference>
<dbReference type="EMBL" id="CP002684">
    <property type="protein sequence ID" value="AEE35216.1"/>
    <property type="molecule type" value="Genomic_DNA"/>
</dbReference>
<dbReference type="EMBL" id="BT006157">
    <property type="protein sequence ID" value="AAP04142.1"/>
    <property type="molecule type" value="mRNA"/>
</dbReference>
<dbReference type="EMBL" id="BT008332">
    <property type="protein sequence ID" value="AAP37691.1"/>
    <property type="molecule type" value="mRNA"/>
</dbReference>
<dbReference type="EMBL" id="BT008524">
    <property type="protein sequence ID" value="AAP40351.1"/>
    <property type="molecule type" value="mRNA"/>
</dbReference>
<dbReference type="EMBL" id="AK228190">
    <property type="protein sequence ID" value="BAF00144.1"/>
    <property type="molecule type" value="mRNA"/>
</dbReference>
<dbReference type="PIR" id="H96738">
    <property type="entry name" value="H96738"/>
</dbReference>
<dbReference type="RefSeq" id="NP_565022.1">
    <property type="nucleotide sequence ID" value="NM_105825.3"/>
</dbReference>
<dbReference type="SMR" id="Q38841"/>
<dbReference type="BioGRID" id="28717">
    <property type="interactions" value="9"/>
</dbReference>
<dbReference type="DIP" id="DIP-33766N"/>
<dbReference type="FunCoup" id="Q38841">
    <property type="interactions" value="34"/>
</dbReference>
<dbReference type="IntAct" id="Q38841">
    <property type="interactions" value="10"/>
</dbReference>
<dbReference type="STRING" id="3702.Q38841"/>
<dbReference type="iPTMnet" id="Q38841"/>
<dbReference type="PaxDb" id="3702-AT1G71692.1"/>
<dbReference type="EnsemblPlants" id="AT1G71692.1">
    <property type="protein sequence ID" value="AT1G71692.1"/>
    <property type="gene ID" value="AT1G71692"/>
</dbReference>
<dbReference type="GeneID" id="843497"/>
<dbReference type="Gramene" id="AT1G71692.1">
    <property type="protein sequence ID" value="AT1G71692.1"/>
    <property type="gene ID" value="AT1G71692"/>
</dbReference>
<dbReference type="KEGG" id="ath:AT1G71692"/>
<dbReference type="Araport" id="AT1G71692"/>
<dbReference type="TAIR" id="AT1G71692">
    <property type="gene designation" value="AGL12"/>
</dbReference>
<dbReference type="eggNOG" id="KOG0014">
    <property type="taxonomic scope" value="Eukaryota"/>
</dbReference>
<dbReference type="HOGENOM" id="CLU_053053_0_3_1"/>
<dbReference type="InParanoid" id="Q38841"/>
<dbReference type="OMA" id="VRSAKMD"/>
<dbReference type="OrthoDB" id="1898716at2759"/>
<dbReference type="PhylomeDB" id="Q38841"/>
<dbReference type="PRO" id="PR:Q38841"/>
<dbReference type="Proteomes" id="UP000006548">
    <property type="component" value="Chromosome 1"/>
</dbReference>
<dbReference type="ExpressionAtlas" id="Q38841">
    <property type="expression patterns" value="baseline and differential"/>
</dbReference>
<dbReference type="GO" id="GO:0005634">
    <property type="term" value="C:nucleus"/>
    <property type="evidence" value="ECO:0007669"/>
    <property type="project" value="UniProtKB-SubCell"/>
</dbReference>
<dbReference type="GO" id="GO:0003700">
    <property type="term" value="F:DNA-binding transcription factor activity"/>
    <property type="evidence" value="ECO:0000250"/>
    <property type="project" value="TAIR"/>
</dbReference>
<dbReference type="GO" id="GO:0046983">
    <property type="term" value="F:protein dimerization activity"/>
    <property type="evidence" value="ECO:0007669"/>
    <property type="project" value="InterPro"/>
</dbReference>
<dbReference type="GO" id="GO:0000977">
    <property type="term" value="F:RNA polymerase II transcription regulatory region sequence-specific DNA binding"/>
    <property type="evidence" value="ECO:0007669"/>
    <property type="project" value="InterPro"/>
</dbReference>
<dbReference type="GO" id="GO:0009908">
    <property type="term" value="P:flower development"/>
    <property type="evidence" value="ECO:0007669"/>
    <property type="project" value="UniProtKB-KW"/>
</dbReference>
<dbReference type="GO" id="GO:0045944">
    <property type="term" value="P:positive regulation of transcription by RNA polymerase II"/>
    <property type="evidence" value="ECO:0007669"/>
    <property type="project" value="InterPro"/>
</dbReference>
<dbReference type="GO" id="GO:0048364">
    <property type="term" value="P:root development"/>
    <property type="evidence" value="ECO:0000315"/>
    <property type="project" value="TAIR"/>
</dbReference>
<dbReference type="GO" id="GO:0010228">
    <property type="term" value="P:vegetative to reproductive phase transition of meristem"/>
    <property type="evidence" value="ECO:0000315"/>
    <property type="project" value="TAIR"/>
</dbReference>
<dbReference type="CDD" id="cd00265">
    <property type="entry name" value="MADS_MEF2_like"/>
    <property type="match status" value="1"/>
</dbReference>
<dbReference type="FunFam" id="3.40.1810.10:FF:000019">
    <property type="entry name" value="Agamous-like MADS-box protein AGL8"/>
    <property type="match status" value="1"/>
</dbReference>
<dbReference type="Gene3D" id="3.40.1810.10">
    <property type="entry name" value="Transcription factor, MADS-box"/>
    <property type="match status" value="1"/>
</dbReference>
<dbReference type="InterPro" id="IPR050142">
    <property type="entry name" value="MADS-box/MEF2_TF"/>
</dbReference>
<dbReference type="InterPro" id="IPR033896">
    <property type="entry name" value="MEF2-like_N"/>
</dbReference>
<dbReference type="InterPro" id="IPR002487">
    <property type="entry name" value="TF_Kbox"/>
</dbReference>
<dbReference type="InterPro" id="IPR002100">
    <property type="entry name" value="TF_MADSbox"/>
</dbReference>
<dbReference type="InterPro" id="IPR036879">
    <property type="entry name" value="TF_MADSbox_sf"/>
</dbReference>
<dbReference type="PANTHER" id="PTHR48019">
    <property type="entry name" value="SERUM RESPONSE FACTOR HOMOLOG"/>
    <property type="match status" value="1"/>
</dbReference>
<dbReference type="Pfam" id="PF01486">
    <property type="entry name" value="K-box"/>
    <property type="match status" value="1"/>
</dbReference>
<dbReference type="Pfam" id="PF00319">
    <property type="entry name" value="SRF-TF"/>
    <property type="match status" value="1"/>
</dbReference>
<dbReference type="PRINTS" id="PR00404">
    <property type="entry name" value="MADSDOMAIN"/>
</dbReference>
<dbReference type="SMART" id="SM00432">
    <property type="entry name" value="MADS"/>
    <property type="match status" value="1"/>
</dbReference>
<dbReference type="SUPFAM" id="SSF55455">
    <property type="entry name" value="SRF-like"/>
    <property type="match status" value="1"/>
</dbReference>
<dbReference type="PROSITE" id="PS51297">
    <property type="entry name" value="K_BOX"/>
    <property type="match status" value="1"/>
</dbReference>
<dbReference type="PROSITE" id="PS00350">
    <property type="entry name" value="MADS_BOX_1"/>
    <property type="match status" value="1"/>
</dbReference>
<dbReference type="PROSITE" id="PS50066">
    <property type="entry name" value="MADS_BOX_2"/>
    <property type="match status" value="1"/>
</dbReference>
<feature type="chain" id="PRO_0000199471" description="Agamous-like MADS-box protein AGL12">
    <location>
        <begin position="1"/>
        <end position="211"/>
    </location>
</feature>
<feature type="domain" description="MADS-box" evidence="1">
    <location>
        <begin position="3"/>
        <end position="57"/>
    </location>
</feature>
<feature type="domain" description="K-box" evidence="2">
    <location>
        <begin position="95"/>
        <end position="185"/>
    </location>
</feature>
<feature type="sequence conflict" description="In Ref. 1; AAC49085." evidence="8" ref="1">
    <original>E</original>
    <variation>D</variation>
    <location>
        <position position="177"/>
    </location>
</feature>
<protein>
    <recommendedName>
        <fullName evidence="8">Agamous-like MADS-box protein AGL12</fullName>
    </recommendedName>
    <alternativeName>
        <fullName evidence="7">Protein XAANTAL 1</fullName>
    </alternativeName>
</protein>
<organism>
    <name type="scientific">Arabidopsis thaliana</name>
    <name type="common">Mouse-ear cress</name>
    <dbReference type="NCBI Taxonomy" id="3702"/>
    <lineage>
        <taxon>Eukaryota</taxon>
        <taxon>Viridiplantae</taxon>
        <taxon>Streptophyta</taxon>
        <taxon>Embryophyta</taxon>
        <taxon>Tracheophyta</taxon>
        <taxon>Spermatophyta</taxon>
        <taxon>Magnoliopsida</taxon>
        <taxon>eudicotyledons</taxon>
        <taxon>Gunneridae</taxon>
        <taxon>Pentapetalae</taxon>
        <taxon>rosids</taxon>
        <taxon>malvids</taxon>
        <taxon>Brassicales</taxon>
        <taxon>Brassicaceae</taxon>
        <taxon>Camelineae</taxon>
        <taxon>Arabidopsis</taxon>
    </lineage>
</organism>
<accession>Q38841</accession>
<accession>Q0WRV5</accession>
<accession>Q9SF79</accession>
<comment type="function">
    <text evidence="4">Probable transcription activator that regulates root development by controlling cell proliferation in root meristem. May mediate responses to auxin in the root. May act as promoter of the flowering transition through up-regulation of SOC, FT and LFY.</text>
</comment>
<comment type="interaction">
    <interactant intactId="EBI-621976">
        <id>Q38841</id>
    </interactant>
    <interactant intactId="EBI-621986">
        <id>Q9SZJ6</id>
        <label>AGL21</label>
    </interactant>
    <organismsDiffer>false</organismsDiffer>
    <experiments>4</experiments>
</comment>
<comment type="subcellular location">
    <subcellularLocation>
        <location evidence="1">Nucleus</location>
    </subcellularLocation>
</comment>
<comment type="tissue specificity">
    <text evidence="3 4 5">Preferentially expressed in roots (PubMed:7549482). In root meristem, expressed in external cells of columella, lateral root cap and atrichoblasts. In mature root, expressed in the central cylinder (PubMed:11855641). Expressed in leaf vasculature, young floral meristems and nectaries (PubMed:18203871).</text>
</comment>
<comment type="developmental stage">
    <text evidence="3">During embryo development, expressed in a punctate pattern from the globular stage to the torpedo stage.</text>
</comment>
<comment type="induction">
    <text evidence="4">By auxin in root phloem.</text>
</comment>
<comment type="disruption phenotype">
    <text evidence="4">Retarded root growth, and altered root meristem size and stem-cell patterning. Late flowering phenotype.</text>
</comment>
<comment type="miscellaneous">
    <text evidence="7">XAANTAL is the Mayan word for 'go slower' in recognition of the retarded root growth phenotypes of xaantal mutants.</text>
</comment>
<name>AGL12_ARATH</name>
<reference key="1">
    <citation type="journal article" date="1995" name="Plant Cell">
        <title>Diverse roles for MADS box genes in Arabidopsis development.</title>
        <authorList>
            <person name="Rounsley S.D."/>
            <person name="Ditta G.S."/>
            <person name="Yanofsky M.F."/>
        </authorList>
    </citation>
    <scope>NUCLEOTIDE SEQUENCE [MRNA]</scope>
    <scope>TISSUE SPECIFICITY</scope>
    <source>
        <strain>cv. Landsberg erecta</strain>
    </source>
</reference>
<reference key="2">
    <citation type="journal article" date="2000" name="Nature">
        <title>Sequence and analysis of chromosome 1 of the plant Arabidopsis thaliana.</title>
        <authorList>
            <person name="Theologis A."/>
            <person name="Ecker J.R."/>
            <person name="Palm C.J."/>
            <person name="Federspiel N.A."/>
            <person name="Kaul S."/>
            <person name="White O."/>
            <person name="Alonso J."/>
            <person name="Altafi H."/>
            <person name="Araujo R."/>
            <person name="Bowman C.L."/>
            <person name="Brooks S.Y."/>
            <person name="Buehler E."/>
            <person name="Chan A."/>
            <person name="Chao Q."/>
            <person name="Chen H."/>
            <person name="Cheuk R.F."/>
            <person name="Chin C.W."/>
            <person name="Chung M.K."/>
            <person name="Conn L."/>
            <person name="Conway A.B."/>
            <person name="Conway A.R."/>
            <person name="Creasy T.H."/>
            <person name="Dewar K."/>
            <person name="Dunn P."/>
            <person name="Etgu P."/>
            <person name="Feldblyum T.V."/>
            <person name="Feng J.-D."/>
            <person name="Fong B."/>
            <person name="Fujii C.Y."/>
            <person name="Gill J.E."/>
            <person name="Goldsmith A.D."/>
            <person name="Haas B."/>
            <person name="Hansen N.F."/>
            <person name="Hughes B."/>
            <person name="Huizar L."/>
            <person name="Hunter J.L."/>
            <person name="Jenkins J."/>
            <person name="Johnson-Hopson C."/>
            <person name="Khan S."/>
            <person name="Khaykin E."/>
            <person name="Kim C.J."/>
            <person name="Koo H.L."/>
            <person name="Kremenetskaia I."/>
            <person name="Kurtz D.B."/>
            <person name="Kwan A."/>
            <person name="Lam B."/>
            <person name="Langin-Hooper S."/>
            <person name="Lee A."/>
            <person name="Lee J.M."/>
            <person name="Lenz C.A."/>
            <person name="Li J.H."/>
            <person name="Li Y.-P."/>
            <person name="Lin X."/>
            <person name="Liu S.X."/>
            <person name="Liu Z.A."/>
            <person name="Luros J.S."/>
            <person name="Maiti R."/>
            <person name="Marziali A."/>
            <person name="Militscher J."/>
            <person name="Miranda M."/>
            <person name="Nguyen M."/>
            <person name="Nierman W.C."/>
            <person name="Osborne B.I."/>
            <person name="Pai G."/>
            <person name="Peterson J."/>
            <person name="Pham P.K."/>
            <person name="Rizzo M."/>
            <person name="Rooney T."/>
            <person name="Rowley D."/>
            <person name="Sakano H."/>
            <person name="Salzberg S.L."/>
            <person name="Schwartz J.R."/>
            <person name="Shinn P."/>
            <person name="Southwick A.M."/>
            <person name="Sun H."/>
            <person name="Tallon L.J."/>
            <person name="Tambunga G."/>
            <person name="Toriumi M.J."/>
            <person name="Town C.D."/>
            <person name="Utterback T."/>
            <person name="Van Aken S."/>
            <person name="Vaysberg M."/>
            <person name="Vysotskaia V.S."/>
            <person name="Walker M."/>
            <person name="Wu D."/>
            <person name="Yu G."/>
            <person name="Fraser C.M."/>
            <person name="Venter J.C."/>
            <person name="Davis R.W."/>
        </authorList>
    </citation>
    <scope>NUCLEOTIDE SEQUENCE [LARGE SCALE GENOMIC DNA]</scope>
    <source>
        <strain>cv. Columbia</strain>
    </source>
</reference>
<reference key="3">
    <citation type="journal article" date="2017" name="Plant J.">
        <title>Araport11: a complete reannotation of the Arabidopsis thaliana reference genome.</title>
        <authorList>
            <person name="Cheng C.Y."/>
            <person name="Krishnakumar V."/>
            <person name="Chan A.P."/>
            <person name="Thibaud-Nissen F."/>
            <person name="Schobel S."/>
            <person name="Town C.D."/>
        </authorList>
    </citation>
    <scope>GENOME REANNOTATION</scope>
    <source>
        <strain>cv. Columbia</strain>
    </source>
</reference>
<reference key="4">
    <citation type="journal article" date="2003" name="Science">
        <title>Empirical analysis of transcriptional activity in the Arabidopsis genome.</title>
        <authorList>
            <person name="Yamada K."/>
            <person name="Lim J."/>
            <person name="Dale J.M."/>
            <person name="Chen H."/>
            <person name="Shinn P."/>
            <person name="Palm C.J."/>
            <person name="Southwick A.M."/>
            <person name="Wu H.C."/>
            <person name="Kim C.J."/>
            <person name="Nguyen M."/>
            <person name="Pham P.K."/>
            <person name="Cheuk R.F."/>
            <person name="Karlin-Newmann G."/>
            <person name="Liu S.X."/>
            <person name="Lam B."/>
            <person name="Sakano H."/>
            <person name="Wu T."/>
            <person name="Yu G."/>
            <person name="Miranda M."/>
            <person name="Quach H.L."/>
            <person name="Tripp M."/>
            <person name="Chang C.H."/>
            <person name="Lee J.M."/>
            <person name="Toriumi M.J."/>
            <person name="Chan M.M."/>
            <person name="Tang C.C."/>
            <person name="Onodera C.S."/>
            <person name="Deng J.M."/>
            <person name="Akiyama K."/>
            <person name="Ansari Y."/>
            <person name="Arakawa T."/>
            <person name="Banh J."/>
            <person name="Banno F."/>
            <person name="Bowser L."/>
            <person name="Brooks S.Y."/>
            <person name="Carninci P."/>
            <person name="Chao Q."/>
            <person name="Choy N."/>
            <person name="Enju A."/>
            <person name="Goldsmith A.D."/>
            <person name="Gurjal M."/>
            <person name="Hansen N.F."/>
            <person name="Hayashizaki Y."/>
            <person name="Johnson-Hopson C."/>
            <person name="Hsuan V.W."/>
            <person name="Iida K."/>
            <person name="Karnes M."/>
            <person name="Khan S."/>
            <person name="Koesema E."/>
            <person name="Ishida J."/>
            <person name="Jiang P.X."/>
            <person name="Jones T."/>
            <person name="Kawai J."/>
            <person name="Kamiya A."/>
            <person name="Meyers C."/>
            <person name="Nakajima M."/>
            <person name="Narusaka M."/>
            <person name="Seki M."/>
            <person name="Sakurai T."/>
            <person name="Satou M."/>
            <person name="Tamse R."/>
            <person name="Vaysberg M."/>
            <person name="Wallender E.K."/>
            <person name="Wong C."/>
            <person name="Yamamura Y."/>
            <person name="Yuan S."/>
            <person name="Shinozaki K."/>
            <person name="Davis R.W."/>
            <person name="Theologis A."/>
            <person name="Ecker J.R."/>
        </authorList>
    </citation>
    <scope>NUCLEOTIDE SEQUENCE [LARGE SCALE MRNA]</scope>
    <source>
        <strain>cv. Columbia</strain>
    </source>
</reference>
<reference key="5">
    <citation type="submission" date="2006-07" db="EMBL/GenBank/DDBJ databases">
        <title>Large-scale analysis of RIKEN Arabidopsis full-length (RAFL) cDNAs.</title>
        <authorList>
            <person name="Totoki Y."/>
            <person name="Seki M."/>
            <person name="Ishida J."/>
            <person name="Nakajima M."/>
            <person name="Enju A."/>
            <person name="Kamiya A."/>
            <person name="Narusaka M."/>
            <person name="Shin-i T."/>
            <person name="Nakagawa M."/>
            <person name="Sakamoto N."/>
            <person name="Oishi K."/>
            <person name="Kohara Y."/>
            <person name="Kobayashi M."/>
            <person name="Toyoda A."/>
            <person name="Sakaki Y."/>
            <person name="Sakurai T."/>
            <person name="Iida K."/>
            <person name="Akiyama K."/>
            <person name="Satou M."/>
            <person name="Toyoda T."/>
            <person name="Konagaya A."/>
            <person name="Carninci P."/>
            <person name="Kawai J."/>
            <person name="Hayashizaki Y."/>
            <person name="Shinozaki K."/>
        </authorList>
    </citation>
    <scope>NUCLEOTIDE SEQUENCE [LARGE SCALE MRNA]</scope>
    <source>
        <strain>cv. Columbia</strain>
    </source>
</reference>
<reference key="6">
    <citation type="journal article" date="2002" name="Planta">
        <title>MADS-box gene expression in lateral primordia, meristems and differentiated tissues of Arabidopsis thaliana roots.</title>
        <authorList>
            <person name="Burgeff C."/>
            <person name="Liljegren S.J."/>
            <person name="Tapia-Lopez R."/>
            <person name="Yanofsky M.F."/>
            <person name="Alvarez-Buylla E.R."/>
        </authorList>
    </citation>
    <scope>TISSUE SPECIFICITY</scope>
    <scope>DEVELOPMENTAL STAGE</scope>
</reference>
<reference key="7">
    <citation type="journal article" date="2003" name="Plant Cell">
        <title>Molecular and phylogenetic analyses of the complete MADS-box transcription factor family in Arabidopsis: new openings to the MADS world.</title>
        <authorList>
            <person name="Parenicova L."/>
            <person name="de Folter S."/>
            <person name="Kieffer M."/>
            <person name="Horner D.S."/>
            <person name="Favalli C."/>
            <person name="Busscher J."/>
            <person name="Cook H.E."/>
            <person name="Ingram R.M."/>
            <person name="Kater M.M."/>
            <person name="Davies B."/>
            <person name="Angenent G.C."/>
            <person name="Colombo L."/>
        </authorList>
    </citation>
    <scope>GENE FAMILY</scope>
    <scope>NOMENCLATURE</scope>
</reference>
<reference key="8">
    <citation type="journal article" date="2008" name="Plant Physiol.">
        <title>An AGAMOUS-related MADS-box gene, XAL1 (AGL12), regulates root meristem cell proliferation and flowering transition in Arabidopsis.</title>
        <authorList>
            <person name="Tapia-Lopez R."/>
            <person name="Garcia-Ponce B."/>
            <person name="Dubrovsky J.G."/>
            <person name="Garay-Arroyo A."/>
            <person name="Perez-Ruiz R.V."/>
            <person name="Kim S.H."/>
            <person name="Acevedo F."/>
            <person name="Pelaz S."/>
            <person name="Alvarez-Buylla E.R."/>
        </authorList>
    </citation>
    <scope>FUNCTION</scope>
    <scope>TISSUE SPECIFICITY</scope>
    <scope>INDUCTION BY AUXIN</scope>
    <scope>DISRUPTION PHENOTYPE</scope>
</reference>
<sequence>MARGKIQLKRIENPVHRQVTFCKRRTGLLKKAKELSVLCDAEIGVVIFSPQGKLFELATKGTMEGMIDKYMKCTGGGRGSSSATFTAQEQLQPPNLDPKDEINVLKQEIEMLQKGISYMFGGGDGAMNLEELLLLEKHLEYWISQIRSAKMDVMLQEIQSLRNKEGVLKNTNKYLLEKIEENNNSILDANFAVMETNYSYPLTMPSEIFQF</sequence>
<proteinExistence type="evidence at protein level"/>
<gene>
    <name evidence="6" type="primary">AGL12</name>
    <name evidence="7" type="synonym">XAL1</name>
    <name evidence="9" type="ordered locus">At1g71692</name>
    <name type="ORF">F14O23.5</name>
    <name type="ORF">F26A9.6</name>
</gene>
<keyword id="KW-0010">Activator</keyword>
<keyword id="KW-0238">DNA-binding</keyword>
<keyword id="KW-0287">Flowering</keyword>
<keyword id="KW-0341">Growth regulation</keyword>
<keyword id="KW-0539">Nucleus</keyword>
<keyword id="KW-1185">Reference proteome</keyword>
<keyword id="KW-0804">Transcription</keyword>
<keyword id="KW-0805">Transcription regulation</keyword>
<evidence type="ECO:0000255" key="1">
    <source>
        <dbReference type="PROSITE-ProRule" id="PRU00251"/>
    </source>
</evidence>
<evidence type="ECO:0000255" key="2">
    <source>
        <dbReference type="PROSITE-ProRule" id="PRU00629"/>
    </source>
</evidence>
<evidence type="ECO:0000269" key="3">
    <source>
    </source>
</evidence>
<evidence type="ECO:0000269" key="4">
    <source>
    </source>
</evidence>
<evidence type="ECO:0000269" key="5">
    <source>
    </source>
</evidence>
<evidence type="ECO:0000303" key="6">
    <source>
    </source>
</evidence>
<evidence type="ECO:0000303" key="7">
    <source>
    </source>
</evidence>
<evidence type="ECO:0000305" key="8"/>
<evidence type="ECO:0000312" key="9">
    <source>
        <dbReference type="Araport" id="AT1G71692"/>
    </source>
</evidence>